<proteinExistence type="evidence at protein level"/>
<feature type="chain" id="PRO_0000050181" description="Paired box protein Pax-4">
    <location>
        <begin position="1"/>
        <end position="349"/>
    </location>
</feature>
<feature type="DNA-binding region" description="Paired" evidence="2">
    <location>
        <begin position="5"/>
        <end position="131"/>
    </location>
</feature>
<feature type="DNA-binding region" description="Homeobox" evidence="1">
    <location>
        <begin position="170"/>
        <end position="229"/>
    </location>
</feature>
<feature type="region of interest" description="PAI subdomain" evidence="2">
    <location>
        <begin position="8"/>
        <end position="64"/>
    </location>
</feature>
<feature type="region of interest" description="RED subdomain" evidence="2">
    <location>
        <begin position="83"/>
        <end position="131"/>
    </location>
</feature>
<feature type="region of interest" description="Transcription repression">
    <location>
        <begin position="278"/>
        <end position="349"/>
    </location>
</feature>
<feature type="splice variant" id="VSP_002361" description="In isoform 2." evidence="4 5">
    <location>
        <begin position="239"/>
        <end position="251"/>
    </location>
</feature>
<feature type="splice variant" id="VSP_002362" description="In isoform 3." evidence="5">
    <location>
        <begin position="278"/>
        <end position="314"/>
    </location>
</feature>
<feature type="mutagenesis site" description="Loss of transactivation function." evidence="3">
    <original>EP</original>
    <variation>DL</variation>
    <location>
        <begin position="272"/>
        <end position="273"/>
    </location>
</feature>
<feature type="sequence conflict" description="In Ref. 8; CAA70772." evidence="6" ref="8">
    <original>T</original>
    <variation>A</variation>
    <location>
        <position position="175"/>
    </location>
</feature>
<feature type="sequence conflict" description="In Ref. 5; AAF14073." evidence="6" ref="5">
    <original>S</original>
    <variation>P</variation>
    <location>
        <position position="277"/>
    </location>
</feature>
<reference key="1">
    <citation type="journal article" date="1998" name="Biochem. Biophys. Res. Commun.">
        <title>Isolation of full-length cDNA of mouse PAX4 gene and identification of its human homologue.</title>
        <authorList>
            <person name="Inoue H."/>
            <person name="Nomiyama J."/>
            <person name="Nakai K."/>
            <person name="Matsutani A."/>
            <person name="Tanizawa Y."/>
            <person name="Oka Y."/>
        </authorList>
    </citation>
    <scope>NUCLEOTIDE SEQUENCE [MRNA] (ISOFORMS 1; 2 AND 3)</scope>
    <source>
        <tissue>Insulinoma</tissue>
    </source>
</reference>
<reference key="2">
    <citation type="journal article" date="1998" name="Biochem. Biophys. Res. Commun.">
        <title>Molecular cloning of mouse paired-box-containing gene (Pax-4) from an islet beta cell line and deduced sequence of human Pax-4.</title>
        <authorList>
            <person name="Matsushita T."/>
            <person name="Yamaoka T."/>
            <person name="Otsuka S."/>
            <person name="Moritani M."/>
            <person name="Matsumoto T."/>
            <person name="Itakura M."/>
        </authorList>
    </citation>
    <scope>NUCLEOTIDE SEQUENCE [MRNA]</scope>
    <source>
        <tissue>Insulinoma</tissue>
    </source>
</reference>
<reference key="3">
    <citation type="journal article" date="1999" name="Biochem. Biophys. Res. Commun.">
        <title>DNA binding and transactivating properties of the paired and homeobox protein Pax4.</title>
        <authorList>
            <person name="Kalousova A."/>
            <person name="Benes V."/>
            <person name="Paces J."/>
            <person name="Paces V."/>
            <person name="Kozmik Z."/>
        </authorList>
    </citation>
    <scope>NUCLEOTIDE SEQUENCE [GENOMIC DNA / MRNA]</scope>
    <scope>MUTAGENESIS OF 272-GLU-PRO-273</scope>
</reference>
<reference key="4">
    <citation type="journal article" date="1999" name="Mol. Cell. Biol.">
        <title>Identification of a portable repression domain and an E1A-responsive activation domain in Pax4: a possible role of Pax4 as a transcriptional repressor in the pancreas.</title>
        <authorList>
            <person name="Fujitani Y."/>
            <person name="Kajimoto Y."/>
            <person name="Yasuda T."/>
            <person name="Matsuoka T.-A."/>
            <person name="Kaneto H."/>
            <person name="Umayahara Y."/>
            <person name="Fujita N."/>
            <person name="Watada H."/>
            <person name="Miyazaki J."/>
            <person name="Yamasaki Y."/>
        </authorList>
    </citation>
    <scope>NUCLEOTIDE SEQUENCE [MRNA]</scope>
    <source>
        <tissue>Insulinoma</tissue>
    </source>
</reference>
<reference key="5">
    <citation type="journal article" date="1999" name="Mol. Cell. Biol.">
        <title>Paired-homeodomain transcription factor PAX4 acts as a transcriptional repressor in early pancreatic development.</title>
        <authorList>
            <person name="Smith S.B."/>
            <person name="Ee H.C."/>
            <person name="Conners J.R."/>
            <person name="German M.S."/>
        </authorList>
    </citation>
    <scope>NUCLEOTIDE SEQUENCE [GENOMIC DNA]</scope>
    <source>
        <tissue>Insulinoma</tissue>
    </source>
</reference>
<reference key="6">
    <citation type="journal article" date="2004" name="Genome Res.">
        <title>The status, quality, and expansion of the NIH full-length cDNA project: the Mammalian Gene Collection (MGC).</title>
        <authorList>
            <consortium name="The MGC Project Team"/>
        </authorList>
    </citation>
    <scope>NUCLEOTIDE SEQUENCE [LARGE SCALE MRNA] (ISOFORM 2)</scope>
    <source>
        <tissue>Brain</tissue>
    </source>
</reference>
<reference key="7">
    <citation type="journal article" date="1991" name="Genomics">
        <title>Pax: a murine multigene family of paired box-containing genes.</title>
        <authorList>
            <person name="Walther C."/>
            <person name="Guenet J.-L."/>
            <person name="Simon D."/>
            <person name="Deutsch U."/>
            <person name="Jostes B."/>
            <person name="Goulding M.D."/>
            <person name="Plachov D."/>
            <person name="Balling R."/>
            <person name="Gruss P."/>
        </authorList>
    </citation>
    <scope>NUCLEOTIDE SEQUENCE OF 6-132</scope>
</reference>
<reference key="8">
    <citation type="journal article" date="1997" name="Nature">
        <title>The Pax4 gene is essential for differentiation of insulin-producing beta cells in the mammalian pancreas.</title>
        <authorList>
            <person name="Sosa-Pineda B."/>
            <person name="Chowdhury K."/>
            <person name="Torres M."/>
            <person name="Oliver G."/>
            <person name="Gruss P."/>
        </authorList>
    </citation>
    <scope>NUCLEOTIDE SEQUENCE [GENOMIC DNA] OF 34-237</scope>
    <source>
        <strain>NMRI</strain>
        <tissue>Embryo</tissue>
    </source>
</reference>
<evidence type="ECO:0000255" key="1">
    <source>
        <dbReference type="PROSITE-ProRule" id="PRU00108"/>
    </source>
</evidence>
<evidence type="ECO:0000255" key="2">
    <source>
        <dbReference type="PROSITE-ProRule" id="PRU00381"/>
    </source>
</evidence>
<evidence type="ECO:0000269" key="3">
    <source>
    </source>
</evidence>
<evidence type="ECO:0000303" key="4">
    <source>
    </source>
</evidence>
<evidence type="ECO:0000303" key="5">
    <source>
    </source>
</evidence>
<evidence type="ECO:0000305" key="6"/>
<accession>P32115</accession>
<accession>B7ZNC7</accession>
<accession>P97341</accession>
<accession>Q9QUR1</accession>
<accession>Q9R091</accession>
<organism>
    <name type="scientific">Mus musculus</name>
    <name type="common">Mouse</name>
    <dbReference type="NCBI Taxonomy" id="10090"/>
    <lineage>
        <taxon>Eukaryota</taxon>
        <taxon>Metazoa</taxon>
        <taxon>Chordata</taxon>
        <taxon>Craniata</taxon>
        <taxon>Vertebrata</taxon>
        <taxon>Euteleostomi</taxon>
        <taxon>Mammalia</taxon>
        <taxon>Eutheria</taxon>
        <taxon>Euarchontoglires</taxon>
        <taxon>Glires</taxon>
        <taxon>Rodentia</taxon>
        <taxon>Myomorpha</taxon>
        <taxon>Muroidea</taxon>
        <taxon>Muridae</taxon>
        <taxon>Murinae</taxon>
        <taxon>Mus</taxon>
        <taxon>Mus</taxon>
    </lineage>
</organism>
<keyword id="KW-0025">Alternative splicing</keyword>
<keyword id="KW-0217">Developmental protein</keyword>
<keyword id="KW-0221">Differentiation</keyword>
<keyword id="KW-0238">DNA-binding</keyword>
<keyword id="KW-0371">Homeobox</keyword>
<keyword id="KW-0539">Nucleus</keyword>
<keyword id="KW-0563">Paired box</keyword>
<keyword id="KW-1185">Reference proteome</keyword>
<keyword id="KW-0678">Repressor</keyword>
<keyword id="KW-0804">Transcription</keyword>
<keyword id="KW-0805">Transcription regulation</keyword>
<gene>
    <name type="primary">Pax4</name>
    <name type="synonym">Pax-4</name>
</gene>
<comment type="function">
    <text>Plays an important role in the differentiation and development of pancreatic islet beta cells. Transcriptional repressor that competes with PAX6 in binding to a common element in the glucagon, insulin and somatostatin promoters.</text>
</comment>
<comment type="subcellular location">
    <subcellularLocation>
        <location>Nucleus</location>
    </subcellularLocation>
</comment>
<comment type="alternative products">
    <event type="alternative splicing"/>
    <isoform>
        <id>P32115-1</id>
        <name>1</name>
        <sequence type="displayed"/>
    </isoform>
    <isoform>
        <id>P32115-2</id>
        <name>2</name>
        <sequence type="described" ref="VSP_002361"/>
    </isoform>
    <isoform>
        <id>P32115-3</id>
        <name>3</name>
        <sequence type="described" ref="VSP_002362"/>
    </isoform>
</comment>
<comment type="tissue specificity">
    <text>Expressed in early pancreas. Later restricted to beta cells. Undetectable in adult islets.</text>
</comment>
<comment type="similarity">
    <text evidence="6">Belongs to the paired homeobox family.</text>
</comment>
<dbReference type="EMBL" id="AF031150">
    <property type="protein sequence ID" value="AAC40046.1"/>
    <property type="molecule type" value="mRNA"/>
</dbReference>
<dbReference type="EMBL" id="AB008912">
    <property type="protein sequence ID" value="BAA24505.1"/>
    <property type="molecule type" value="mRNA"/>
</dbReference>
<dbReference type="EMBL" id="AB010557">
    <property type="protein sequence ID" value="BAA24516.1"/>
    <property type="molecule type" value="mRNA"/>
</dbReference>
<dbReference type="EMBL" id="AB010558">
    <property type="protein sequence ID" value="BAA24517.1"/>
    <property type="molecule type" value="mRNA"/>
</dbReference>
<dbReference type="EMBL" id="AF145233">
    <property type="protein sequence ID" value="AAF03533.1"/>
    <property type="molecule type" value="mRNA"/>
</dbReference>
<dbReference type="EMBL" id="AF142321">
    <property type="protein sequence ID" value="AAF03530.1"/>
    <property type="molecule type" value="Genomic_DNA"/>
</dbReference>
<dbReference type="EMBL" id="BC145168">
    <property type="protein sequence ID" value="AAI45169.1"/>
    <property type="molecule type" value="mRNA"/>
</dbReference>
<dbReference type="EMBL" id="AF104231">
    <property type="protein sequence ID" value="AAF14073.1"/>
    <property type="molecule type" value="mRNA"/>
</dbReference>
<dbReference type="EMBL" id="Y09584">
    <property type="protein sequence ID" value="CAA70772.1"/>
    <property type="molecule type" value="mRNA"/>
</dbReference>
<dbReference type="CCDS" id="CCDS39447.1">
    <molecule id="P32115-1"/>
</dbReference>
<dbReference type="CCDS" id="CCDS51732.1">
    <molecule id="P32115-2"/>
</dbReference>
<dbReference type="PIR" id="A41061">
    <property type="entry name" value="A41061"/>
</dbReference>
<dbReference type="PIR" id="JC5827">
    <property type="entry name" value="JC5827"/>
</dbReference>
<dbReference type="PIR" id="JC5961">
    <property type="entry name" value="JC5961"/>
</dbReference>
<dbReference type="PIR" id="JC5962">
    <property type="entry name" value="JC5962"/>
</dbReference>
<dbReference type="RefSeq" id="NP_001153397.1">
    <molecule id="P32115-2"/>
    <property type="nucleotide sequence ID" value="NM_001159925.1"/>
</dbReference>
<dbReference type="RefSeq" id="NP_001153398.1">
    <property type="nucleotide sequence ID" value="NM_001159926.1"/>
</dbReference>
<dbReference type="RefSeq" id="NP_035168.1">
    <molecule id="P32115-1"/>
    <property type="nucleotide sequence ID" value="NM_011038.2"/>
</dbReference>
<dbReference type="RefSeq" id="XP_017176939.1">
    <property type="nucleotide sequence ID" value="XM_017321450.1"/>
</dbReference>
<dbReference type="SMR" id="P32115"/>
<dbReference type="FunCoup" id="P32115">
    <property type="interactions" value="136"/>
</dbReference>
<dbReference type="STRING" id="10090.ENSMUSP00000031718"/>
<dbReference type="GlyGen" id="P32115">
    <property type="glycosylation" value="1 site"/>
</dbReference>
<dbReference type="PhosphoSitePlus" id="P32115"/>
<dbReference type="PaxDb" id="10090-ENSMUSP00000031718"/>
<dbReference type="Antibodypedia" id="1766">
    <property type="antibodies" value="362 antibodies from 36 providers"/>
</dbReference>
<dbReference type="DNASU" id="18506"/>
<dbReference type="Ensembl" id="ENSMUST00000031718.14">
    <molecule id="P32115-1"/>
    <property type="protein sequence ID" value="ENSMUSP00000031718.8"/>
    <property type="gene ID" value="ENSMUSG00000029706.16"/>
</dbReference>
<dbReference type="Ensembl" id="ENSMUST00000164519.9">
    <molecule id="P32115-2"/>
    <property type="protein sequence ID" value="ENSMUSP00000131301.2"/>
    <property type="gene ID" value="ENSMUSG00000029706.16"/>
</dbReference>
<dbReference type="GeneID" id="18506"/>
<dbReference type="KEGG" id="mmu:18506"/>
<dbReference type="UCSC" id="uc009bcs.2">
    <molecule id="P32115-1"/>
    <property type="organism name" value="mouse"/>
</dbReference>
<dbReference type="UCSC" id="uc012eit.1">
    <molecule id="P32115-2"/>
    <property type="organism name" value="mouse"/>
</dbReference>
<dbReference type="AGR" id="MGI:97488"/>
<dbReference type="CTD" id="5078"/>
<dbReference type="MGI" id="MGI:97488">
    <property type="gene designation" value="Pax4"/>
</dbReference>
<dbReference type="VEuPathDB" id="HostDB:ENSMUSG00000029706"/>
<dbReference type="eggNOG" id="KOG0849">
    <property type="taxonomic scope" value="Eukaryota"/>
</dbReference>
<dbReference type="GeneTree" id="ENSGT00940000161709"/>
<dbReference type="HOGENOM" id="CLU_019281_1_2_1"/>
<dbReference type="InParanoid" id="P32115"/>
<dbReference type="OMA" id="RYYRTGI"/>
<dbReference type="OrthoDB" id="3225452at2759"/>
<dbReference type="PhylomeDB" id="P32115"/>
<dbReference type="TreeFam" id="TF320146"/>
<dbReference type="BioGRID-ORCS" id="18506">
    <property type="hits" value="2 hits in 76 CRISPR screens"/>
</dbReference>
<dbReference type="PRO" id="PR:P32115"/>
<dbReference type="Proteomes" id="UP000000589">
    <property type="component" value="Chromosome 6"/>
</dbReference>
<dbReference type="RNAct" id="P32115">
    <property type="molecule type" value="protein"/>
</dbReference>
<dbReference type="Bgee" id="ENSMUSG00000029706">
    <property type="expression patterns" value="Expressed in entorhinal cortex and 30 other cell types or tissues"/>
</dbReference>
<dbReference type="ExpressionAtlas" id="P32115">
    <property type="expression patterns" value="baseline and differential"/>
</dbReference>
<dbReference type="GO" id="GO:0005634">
    <property type="term" value="C:nucleus"/>
    <property type="evidence" value="ECO:0007669"/>
    <property type="project" value="UniProtKB-SubCell"/>
</dbReference>
<dbReference type="GO" id="GO:0005667">
    <property type="term" value="C:transcription regulator complex"/>
    <property type="evidence" value="ECO:0000304"/>
    <property type="project" value="MGI"/>
</dbReference>
<dbReference type="GO" id="GO:0003677">
    <property type="term" value="F:DNA binding"/>
    <property type="evidence" value="ECO:0000314"/>
    <property type="project" value="MGI"/>
</dbReference>
<dbReference type="GO" id="GO:0003700">
    <property type="term" value="F:DNA-binding transcription factor activity"/>
    <property type="evidence" value="ECO:0000304"/>
    <property type="project" value="MGI"/>
</dbReference>
<dbReference type="GO" id="GO:0001227">
    <property type="term" value="F:DNA-binding transcription repressor activity, RNA polymerase II-specific"/>
    <property type="evidence" value="ECO:0000314"/>
    <property type="project" value="NTNU_SB"/>
</dbReference>
<dbReference type="GO" id="GO:0000978">
    <property type="term" value="F:RNA polymerase II cis-regulatory region sequence-specific DNA binding"/>
    <property type="evidence" value="ECO:0000314"/>
    <property type="project" value="NTNU_SB"/>
</dbReference>
<dbReference type="GO" id="GO:0009887">
    <property type="term" value="P:animal organ morphogenesis"/>
    <property type="evidence" value="ECO:0000304"/>
    <property type="project" value="MGI"/>
</dbReference>
<dbReference type="GO" id="GO:0007623">
    <property type="term" value="P:circadian rhythm"/>
    <property type="evidence" value="ECO:0007669"/>
    <property type="project" value="Ensembl"/>
</dbReference>
<dbReference type="GO" id="GO:0043066">
    <property type="term" value="P:negative regulation of apoptotic process"/>
    <property type="evidence" value="ECO:0007669"/>
    <property type="project" value="Ensembl"/>
</dbReference>
<dbReference type="GO" id="GO:0000122">
    <property type="term" value="P:negative regulation of transcription by RNA polymerase II"/>
    <property type="evidence" value="ECO:0000314"/>
    <property type="project" value="NTNU_SB"/>
</dbReference>
<dbReference type="GO" id="GO:0030858">
    <property type="term" value="P:positive regulation of epithelial cell differentiation"/>
    <property type="evidence" value="ECO:0000315"/>
    <property type="project" value="MGI"/>
</dbReference>
<dbReference type="GO" id="GO:0045595">
    <property type="term" value="P:regulation of cell differentiation"/>
    <property type="evidence" value="ECO:0000315"/>
    <property type="project" value="MGI"/>
</dbReference>
<dbReference type="GO" id="GO:0006355">
    <property type="term" value="P:regulation of DNA-templated transcription"/>
    <property type="evidence" value="ECO:0000304"/>
    <property type="project" value="MGI"/>
</dbReference>
<dbReference type="GO" id="GO:0051591">
    <property type="term" value="P:response to cAMP"/>
    <property type="evidence" value="ECO:0007669"/>
    <property type="project" value="Ensembl"/>
</dbReference>
<dbReference type="GO" id="GO:0009410">
    <property type="term" value="P:response to xenobiotic stimulus"/>
    <property type="evidence" value="ECO:0007669"/>
    <property type="project" value="Ensembl"/>
</dbReference>
<dbReference type="GO" id="GO:0060041">
    <property type="term" value="P:retina development in camera-type eye"/>
    <property type="evidence" value="ECO:0007669"/>
    <property type="project" value="Ensembl"/>
</dbReference>
<dbReference type="GO" id="GO:0003309">
    <property type="term" value="P:type B pancreatic cell differentiation"/>
    <property type="evidence" value="ECO:0000315"/>
    <property type="project" value="MGI"/>
</dbReference>
<dbReference type="CDD" id="cd00086">
    <property type="entry name" value="homeodomain"/>
    <property type="match status" value="1"/>
</dbReference>
<dbReference type="FunFam" id="1.10.10.60:FF:000226">
    <property type="entry name" value="Paired box gene 4"/>
    <property type="match status" value="1"/>
</dbReference>
<dbReference type="FunFam" id="1.10.10.10:FF:000003">
    <property type="entry name" value="Paired box protein Pax-6"/>
    <property type="match status" value="1"/>
</dbReference>
<dbReference type="FunFam" id="1.10.10.10:FF:000069">
    <property type="entry name" value="Paired box protein Pax-6"/>
    <property type="match status" value="1"/>
</dbReference>
<dbReference type="Gene3D" id="1.10.10.60">
    <property type="entry name" value="Homeodomain-like"/>
    <property type="match status" value="1"/>
</dbReference>
<dbReference type="Gene3D" id="1.10.10.10">
    <property type="entry name" value="Winged helix-like DNA-binding domain superfamily/Winged helix DNA-binding domain"/>
    <property type="match status" value="2"/>
</dbReference>
<dbReference type="InterPro" id="IPR001356">
    <property type="entry name" value="HD"/>
</dbReference>
<dbReference type="InterPro" id="IPR017970">
    <property type="entry name" value="Homeobox_CS"/>
</dbReference>
<dbReference type="InterPro" id="IPR009057">
    <property type="entry name" value="Homeodomain-like_sf"/>
</dbReference>
<dbReference type="InterPro" id="IPR043182">
    <property type="entry name" value="PAIRED_DNA-bd_dom"/>
</dbReference>
<dbReference type="InterPro" id="IPR001523">
    <property type="entry name" value="Paired_dom"/>
</dbReference>
<dbReference type="InterPro" id="IPR043565">
    <property type="entry name" value="PAX_fam"/>
</dbReference>
<dbReference type="InterPro" id="IPR036388">
    <property type="entry name" value="WH-like_DNA-bd_sf"/>
</dbReference>
<dbReference type="PANTHER" id="PTHR45636:SF8">
    <property type="entry name" value="PAIRED BOX PROTEIN PAX-4"/>
    <property type="match status" value="1"/>
</dbReference>
<dbReference type="PANTHER" id="PTHR45636">
    <property type="entry name" value="PAIRED BOX PROTEIN PAX-6-RELATED-RELATED"/>
    <property type="match status" value="1"/>
</dbReference>
<dbReference type="Pfam" id="PF00046">
    <property type="entry name" value="Homeodomain"/>
    <property type="match status" value="1"/>
</dbReference>
<dbReference type="Pfam" id="PF00292">
    <property type="entry name" value="PAX"/>
    <property type="match status" value="1"/>
</dbReference>
<dbReference type="PRINTS" id="PR00027">
    <property type="entry name" value="PAIREDBOX"/>
</dbReference>
<dbReference type="SMART" id="SM00389">
    <property type="entry name" value="HOX"/>
    <property type="match status" value="1"/>
</dbReference>
<dbReference type="SMART" id="SM00351">
    <property type="entry name" value="PAX"/>
    <property type="match status" value="1"/>
</dbReference>
<dbReference type="SUPFAM" id="SSF46689">
    <property type="entry name" value="Homeodomain-like"/>
    <property type="match status" value="2"/>
</dbReference>
<dbReference type="PROSITE" id="PS00027">
    <property type="entry name" value="HOMEOBOX_1"/>
    <property type="match status" value="1"/>
</dbReference>
<dbReference type="PROSITE" id="PS50071">
    <property type="entry name" value="HOMEOBOX_2"/>
    <property type="match status" value="1"/>
</dbReference>
<dbReference type="PROSITE" id="PS00034">
    <property type="entry name" value="PAIRED_1"/>
    <property type="match status" value="1"/>
</dbReference>
<dbReference type="PROSITE" id="PS51057">
    <property type="entry name" value="PAIRED_2"/>
    <property type="match status" value="1"/>
</dbReference>
<protein>
    <recommendedName>
        <fullName>Paired box protein Pax-4</fullName>
    </recommendedName>
</protein>
<name>PAX4_MOUSE</name>
<sequence>MQQDGLSSVNQLGGLFVNGRPLPLDTRQQIVQLAIRGMRPCDISRSLKVSNGCVSKILGRYYRTGVLEPKCIGGSKPRLATPAVVARIAQLKDEYPALFAWEIQHQLCTEGLCTQDKAPSVSSINRVLRALQEDQSLHWTQLRSPAVLAPVLPSPHSNCGAPRGPHPGTSHRNRTIFSPGQAEALEKEFQRGQYPDSVARGKLAAATSLPEDTVRVWFSNRRAKWRRQEKLKWEAQLPGASQDLTVPKNSPGIISAQQSPGSVPSAALPVLEPLSPSFCQLCCGTAPGRCSSDTSSQAYLQPYWDCQSLLPVASSSYVEFAWPCLTTHPVHHLIGGPGQVPSTHCSNWP</sequence>